<reference key="1">
    <citation type="journal article" date="2000" name="Nature">
        <title>Genome sequence of the endocellular bacterial symbiont of aphids Buchnera sp. APS.</title>
        <authorList>
            <person name="Shigenobu S."/>
            <person name="Watanabe H."/>
            <person name="Hattori M."/>
            <person name="Sakaki Y."/>
            <person name="Ishikawa H."/>
        </authorList>
    </citation>
    <scope>NUCLEOTIDE SEQUENCE [LARGE SCALE GENOMIC DNA]</scope>
    <source>
        <strain>APS</strain>
    </source>
</reference>
<dbReference type="EMBL" id="BA000003">
    <property type="protein sequence ID" value="BAB12764.1"/>
    <property type="molecule type" value="Genomic_DNA"/>
</dbReference>
<dbReference type="RefSeq" id="NP_239878.1">
    <property type="nucleotide sequence ID" value="NC_002528.1"/>
</dbReference>
<dbReference type="RefSeq" id="WP_010895913.1">
    <property type="nucleotide sequence ID" value="NC_002528.1"/>
</dbReference>
<dbReference type="SMR" id="P57149"/>
<dbReference type="STRING" id="563178.BUAP5A_036"/>
<dbReference type="EnsemblBacteria" id="BAB12764">
    <property type="protein sequence ID" value="BAB12764"/>
    <property type="gene ID" value="BAB12764"/>
</dbReference>
<dbReference type="KEGG" id="buc:BU037"/>
<dbReference type="PATRIC" id="fig|107806.10.peg.50"/>
<dbReference type="eggNOG" id="COG0081">
    <property type="taxonomic scope" value="Bacteria"/>
</dbReference>
<dbReference type="HOGENOM" id="CLU_062853_0_0_6"/>
<dbReference type="Proteomes" id="UP000001806">
    <property type="component" value="Chromosome"/>
</dbReference>
<dbReference type="GO" id="GO:0022625">
    <property type="term" value="C:cytosolic large ribosomal subunit"/>
    <property type="evidence" value="ECO:0007669"/>
    <property type="project" value="TreeGrafter"/>
</dbReference>
<dbReference type="GO" id="GO:0019843">
    <property type="term" value="F:rRNA binding"/>
    <property type="evidence" value="ECO:0007669"/>
    <property type="project" value="UniProtKB-UniRule"/>
</dbReference>
<dbReference type="GO" id="GO:0003735">
    <property type="term" value="F:structural constituent of ribosome"/>
    <property type="evidence" value="ECO:0007669"/>
    <property type="project" value="InterPro"/>
</dbReference>
<dbReference type="GO" id="GO:0000049">
    <property type="term" value="F:tRNA binding"/>
    <property type="evidence" value="ECO:0007669"/>
    <property type="project" value="UniProtKB-KW"/>
</dbReference>
<dbReference type="GO" id="GO:0006417">
    <property type="term" value="P:regulation of translation"/>
    <property type="evidence" value="ECO:0007669"/>
    <property type="project" value="UniProtKB-KW"/>
</dbReference>
<dbReference type="GO" id="GO:0006412">
    <property type="term" value="P:translation"/>
    <property type="evidence" value="ECO:0007669"/>
    <property type="project" value="UniProtKB-UniRule"/>
</dbReference>
<dbReference type="CDD" id="cd00403">
    <property type="entry name" value="Ribosomal_L1"/>
    <property type="match status" value="1"/>
</dbReference>
<dbReference type="FunFam" id="3.40.50.790:FF:000001">
    <property type="entry name" value="50S ribosomal protein L1"/>
    <property type="match status" value="1"/>
</dbReference>
<dbReference type="Gene3D" id="3.30.190.20">
    <property type="match status" value="1"/>
</dbReference>
<dbReference type="Gene3D" id="3.40.50.790">
    <property type="match status" value="1"/>
</dbReference>
<dbReference type="HAMAP" id="MF_01318_B">
    <property type="entry name" value="Ribosomal_uL1_B"/>
    <property type="match status" value="1"/>
</dbReference>
<dbReference type="InterPro" id="IPR005878">
    <property type="entry name" value="Ribosom_uL1_bac-type"/>
</dbReference>
<dbReference type="InterPro" id="IPR002143">
    <property type="entry name" value="Ribosomal_uL1"/>
</dbReference>
<dbReference type="InterPro" id="IPR023674">
    <property type="entry name" value="Ribosomal_uL1-like"/>
</dbReference>
<dbReference type="InterPro" id="IPR028364">
    <property type="entry name" value="Ribosomal_uL1/biogenesis"/>
</dbReference>
<dbReference type="InterPro" id="IPR016095">
    <property type="entry name" value="Ribosomal_uL1_3-a/b-sand"/>
</dbReference>
<dbReference type="InterPro" id="IPR023673">
    <property type="entry name" value="Ribosomal_uL1_CS"/>
</dbReference>
<dbReference type="NCBIfam" id="TIGR01169">
    <property type="entry name" value="rplA_bact"/>
    <property type="match status" value="1"/>
</dbReference>
<dbReference type="PANTHER" id="PTHR36427">
    <property type="entry name" value="54S RIBOSOMAL PROTEIN L1, MITOCHONDRIAL"/>
    <property type="match status" value="1"/>
</dbReference>
<dbReference type="PANTHER" id="PTHR36427:SF3">
    <property type="entry name" value="LARGE RIBOSOMAL SUBUNIT PROTEIN UL1M"/>
    <property type="match status" value="1"/>
</dbReference>
<dbReference type="Pfam" id="PF00687">
    <property type="entry name" value="Ribosomal_L1"/>
    <property type="match status" value="1"/>
</dbReference>
<dbReference type="PIRSF" id="PIRSF002155">
    <property type="entry name" value="Ribosomal_L1"/>
    <property type="match status" value="1"/>
</dbReference>
<dbReference type="SUPFAM" id="SSF56808">
    <property type="entry name" value="Ribosomal protein L1"/>
    <property type="match status" value="1"/>
</dbReference>
<dbReference type="PROSITE" id="PS01199">
    <property type="entry name" value="RIBOSOMAL_L1"/>
    <property type="match status" value="1"/>
</dbReference>
<feature type="chain" id="PRO_0000125630" description="Large ribosomal subunit protein uL1">
    <location>
        <begin position="1"/>
        <end position="231"/>
    </location>
</feature>
<accession>P57149</accession>
<proteinExistence type="inferred from homology"/>
<evidence type="ECO:0000255" key="1">
    <source>
        <dbReference type="HAMAP-Rule" id="MF_01318"/>
    </source>
</evidence>
<evidence type="ECO:0000305" key="2"/>
<gene>
    <name evidence="1" type="primary">rplA</name>
    <name type="ordered locus">BU037</name>
</gene>
<keyword id="KW-1185">Reference proteome</keyword>
<keyword id="KW-0678">Repressor</keyword>
<keyword id="KW-0687">Ribonucleoprotein</keyword>
<keyword id="KW-0689">Ribosomal protein</keyword>
<keyword id="KW-0694">RNA-binding</keyword>
<keyword id="KW-0699">rRNA-binding</keyword>
<keyword id="KW-0810">Translation regulation</keyword>
<keyword id="KW-0820">tRNA-binding</keyword>
<name>RL1_BUCAI</name>
<organism>
    <name type="scientific">Buchnera aphidicola subsp. Acyrthosiphon pisum (strain APS)</name>
    <name type="common">Acyrthosiphon pisum symbiotic bacterium</name>
    <dbReference type="NCBI Taxonomy" id="107806"/>
    <lineage>
        <taxon>Bacteria</taxon>
        <taxon>Pseudomonadati</taxon>
        <taxon>Pseudomonadota</taxon>
        <taxon>Gammaproteobacteria</taxon>
        <taxon>Enterobacterales</taxon>
        <taxon>Erwiniaceae</taxon>
        <taxon>Buchnera</taxon>
    </lineage>
</organism>
<protein>
    <recommendedName>
        <fullName evidence="1">Large ribosomal subunit protein uL1</fullName>
    </recommendedName>
    <alternativeName>
        <fullName evidence="2">50S ribosomal protein L1</fullName>
    </alternativeName>
</protein>
<sequence length="231" mass="25485">MNKKTKRMKKIKEHINFAKLHHIDETIDLLKKSSTVKFNESIDIAINLGINSKKSDQNIRSSTVLPNGIGRSIRVAVFTQGDNIAIAKDAGAELIGMEDLSEKIKKEGVDFDVVIATPDAMKIVTQLGQILGPRNLMPNTKLGTITTNIAEAIKNAKTGQVRYRNDKNGIIHATIGRINFHKNEIKENLNVFLESIKKAKPPQSKGIYIKKIVLSTTMGVGLMVDQSTLSL</sequence>
<comment type="function">
    <text evidence="1">Binds directly to 23S rRNA. The L1 stalk is quite mobile in the ribosome, and is involved in E site tRNA release.</text>
</comment>
<comment type="function">
    <text evidence="1">Protein L1 is also a translational repressor protein, it controls the translation of the L11 operon by binding to its mRNA.</text>
</comment>
<comment type="subunit">
    <text evidence="1">Part of the 50S ribosomal subunit.</text>
</comment>
<comment type="similarity">
    <text evidence="1">Belongs to the universal ribosomal protein uL1 family.</text>
</comment>